<evidence type="ECO:0000255" key="1">
    <source>
        <dbReference type="HAMAP-Rule" id="MF_01306"/>
    </source>
</evidence>
<evidence type="ECO:0000256" key="2">
    <source>
        <dbReference type="SAM" id="MobiDB-lite"/>
    </source>
</evidence>
<evidence type="ECO:0000305" key="3"/>
<feature type="chain" id="PRO_1000165391" description="Small ribosomal subunit protein uS4">
    <location>
        <begin position="1"/>
        <end position="205"/>
    </location>
</feature>
<feature type="domain" description="S4 RNA-binding" evidence="1">
    <location>
        <begin position="94"/>
        <end position="154"/>
    </location>
</feature>
<feature type="region of interest" description="Disordered" evidence="2">
    <location>
        <begin position="1"/>
        <end position="46"/>
    </location>
</feature>
<gene>
    <name evidence="1" type="primary">rpsD</name>
    <name type="ordered locus">CCNA_02596</name>
</gene>
<name>RS4_CAUVN</name>
<comment type="function">
    <text evidence="1">One of the primary rRNA binding proteins, it binds directly to 16S rRNA where it nucleates assembly of the body of the 30S subunit.</text>
</comment>
<comment type="function">
    <text evidence="1">With S5 and S12 plays an important role in translational accuracy.</text>
</comment>
<comment type="subunit">
    <text evidence="1">Part of the 30S ribosomal subunit. Contacts protein S5. The interaction surface between S4 and S5 is involved in control of translational fidelity.</text>
</comment>
<comment type="similarity">
    <text evidence="1">Belongs to the universal ribosomal protein uS4 family.</text>
</comment>
<dbReference type="EMBL" id="CP001340">
    <property type="protein sequence ID" value="ACL96061.1"/>
    <property type="molecule type" value="Genomic_DNA"/>
</dbReference>
<dbReference type="RefSeq" id="WP_010920368.1">
    <property type="nucleotide sequence ID" value="NC_011916.1"/>
</dbReference>
<dbReference type="RefSeq" id="YP_002517969.1">
    <property type="nucleotide sequence ID" value="NC_011916.1"/>
</dbReference>
<dbReference type="SMR" id="B8H053"/>
<dbReference type="GeneID" id="7332946"/>
<dbReference type="KEGG" id="ccs:CCNA_02596"/>
<dbReference type="PATRIC" id="fig|565050.3.peg.2546"/>
<dbReference type="HOGENOM" id="CLU_092403_0_0_5"/>
<dbReference type="OrthoDB" id="9803672at2"/>
<dbReference type="PhylomeDB" id="B8H053"/>
<dbReference type="Proteomes" id="UP000001364">
    <property type="component" value="Chromosome"/>
</dbReference>
<dbReference type="GO" id="GO:0015935">
    <property type="term" value="C:small ribosomal subunit"/>
    <property type="evidence" value="ECO:0007669"/>
    <property type="project" value="InterPro"/>
</dbReference>
<dbReference type="GO" id="GO:0019843">
    <property type="term" value="F:rRNA binding"/>
    <property type="evidence" value="ECO:0007669"/>
    <property type="project" value="UniProtKB-UniRule"/>
</dbReference>
<dbReference type="GO" id="GO:0003735">
    <property type="term" value="F:structural constituent of ribosome"/>
    <property type="evidence" value="ECO:0007669"/>
    <property type="project" value="InterPro"/>
</dbReference>
<dbReference type="GO" id="GO:0042274">
    <property type="term" value="P:ribosomal small subunit biogenesis"/>
    <property type="evidence" value="ECO:0007669"/>
    <property type="project" value="TreeGrafter"/>
</dbReference>
<dbReference type="GO" id="GO:0006412">
    <property type="term" value="P:translation"/>
    <property type="evidence" value="ECO:0007669"/>
    <property type="project" value="UniProtKB-UniRule"/>
</dbReference>
<dbReference type="CDD" id="cd00165">
    <property type="entry name" value="S4"/>
    <property type="match status" value="1"/>
</dbReference>
<dbReference type="FunFam" id="3.10.290.10:FF:000001">
    <property type="entry name" value="30S ribosomal protein S4"/>
    <property type="match status" value="1"/>
</dbReference>
<dbReference type="Gene3D" id="1.10.1050.10">
    <property type="entry name" value="Ribosomal Protein S4 Delta 41, Chain A, domain 1"/>
    <property type="match status" value="1"/>
</dbReference>
<dbReference type="Gene3D" id="3.10.290.10">
    <property type="entry name" value="RNA-binding S4 domain"/>
    <property type="match status" value="1"/>
</dbReference>
<dbReference type="HAMAP" id="MF_01306_B">
    <property type="entry name" value="Ribosomal_uS4_B"/>
    <property type="match status" value="1"/>
</dbReference>
<dbReference type="InterPro" id="IPR022801">
    <property type="entry name" value="Ribosomal_uS4"/>
</dbReference>
<dbReference type="InterPro" id="IPR005709">
    <property type="entry name" value="Ribosomal_uS4_bac-type"/>
</dbReference>
<dbReference type="InterPro" id="IPR018079">
    <property type="entry name" value="Ribosomal_uS4_CS"/>
</dbReference>
<dbReference type="InterPro" id="IPR001912">
    <property type="entry name" value="Ribosomal_uS4_N"/>
</dbReference>
<dbReference type="InterPro" id="IPR002942">
    <property type="entry name" value="S4_RNA-bd"/>
</dbReference>
<dbReference type="InterPro" id="IPR036986">
    <property type="entry name" value="S4_RNA-bd_sf"/>
</dbReference>
<dbReference type="NCBIfam" id="NF003717">
    <property type="entry name" value="PRK05327.1"/>
    <property type="match status" value="1"/>
</dbReference>
<dbReference type="NCBIfam" id="TIGR01017">
    <property type="entry name" value="rpsD_bact"/>
    <property type="match status" value="1"/>
</dbReference>
<dbReference type="PANTHER" id="PTHR11831">
    <property type="entry name" value="30S 40S RIBOSOMAL PROTEIN"/>
    <property type="match status" value="1"/>
</dbReference>
<dbReference type="PANTHER" id="PTHR11831:SF4">
    <property type="entry name" value="SMALL RIBOSOMAL SUBUNIT PROTEIN US4M"/>
    <property type="match status" value="1"/>
</dbReference>
<dbReference type="Pfam" id="PF00163">
    <property type="entry name" value="Ribosomal_S4"/>
    <property type="match status" value="1"/>
</dbReference>
<dbReference type="Pfam" id="PF01479">
    <property type="entry name" value="S4"/>
    <property type="match status" value="1"/>
</dbReference>
<dbReference type="SMART" id="SM01390">
    <property type="entry name" value="Ribosomal_S4"/>
    <property type="match status" value="1"/>
</dbReference>
<dbReference type="SMART" id="SM00363">
    <property type="entry name" value="S4"/>
    <property type="match status" value="1"/>
</dbReference>
<dbReference type="SUPFAM" id="SSF55174">
    <property type="entry name" value="Alpha-L RNA-binding motif"/>
    <property type="match status" value="1"/>
</dbReference>
<dbReference type="PROSITE" id="PS00632">
    <property type="entry name" value="RIBOSOMAL_S4"/>
    <property type="match status" value="1"/>
</dbReference>
<dbReference type="PROSITE" id="PS50889">
    <property type="entry name" value="S4"/>
    <property type="match status" value="1"/>
</dbReference>
<organism>
    <name type="scientific">Caulobacter vibrioides (strain NA1000 / CB15N)</name>
    <name type="common">Caulobacter crescentus</name>
    <dbReference type="NCBI Taxonomy" id="565050"/>
    <lineage>
        <taxon>Bacteria</taxon>
        <taxon>Pseudomonadati</taxon>
        <taxon>Pseudomonadota</taxon>
        <taxon>Alphaproteobacteria</taxon>
        <taxon>Caulobacterales</taxon>
        <taxon>Caulobacteraceae</taxon>
        <taxon>Caulobacter</taxon>
    </lineage>
</organism>
<proteinExistence type="inferred from homology"/>
<keyword id="KW-1185">Reference proteome</keyword>
<keyword id="KW-0687">Ribonucleoprotein</keyword>
<keyword id="KW-0689">Ribosomal protein</keyword>
<keyword id="KW-0694">RNA-binding</keyword>
<keyword id="KW-0699">rRNA-binding</keyword>
<protein>
    <recommendedName>
        <fullName evidence="1">Small ribosomal subunit protein uS4</fullName>
    </recommendedName>
    <alternativeName>
        <fullName evidence="3">30S ribosomal protein S4</fullName>
    </alternativeName>
</protein>
<reference key="1">
    <citation type="journal article" date="2010" name="J. Bacteriol.">
        <title>The genetic basis of laboratory adaptation in Caulobacter crescentus.</title>
        <authorList>
            <person name="Marks M.E."/>
            <person name="Castro-Rojas C.M."/>
            <person name="Teiling C."/>
            <person name="Du L."/>
            <person name="Kapatral V."/>
            <person name="Walunas T.L."/>
            <person name="Crosson S."/>
        </authorList>
    </citation>
    <scope>NUCLEOTIDE SEQUENCE [LARGE SCALE GENOMIC DNA]</scope>
    <source>
        <strain>NA1000 / CB15N</strain>
    </source>
</reference>
<sequence length="205" mass="23288">MSKRHSAKYKIDRRMGENLWGRPKSPVNSRSYGPGQHGQRRKSKVSDFGLQLRAKQKLKGYYGNLTEKQFSRTYEEAARRKGNTSENLIALLESRLDAIVYRAKFVPTVFAARQFVNHGHVTVNGKRVNIPSYRCKAGDVIQVREKSRNMALVLEAVASNERDFAEYVSVDAKSLSATFVRAPELSEVPYPVKMEPNLVVEFYAS</sequence>
<accession>B8H053</accession>